<organism>
    <name type="scientific">Debaryomyces hansenii (strain ATCC 36239 / CBS 767 / BCRC 21394 / JCM 1990 / NBRC 0083 / IGC 2968)</name>
    <name type="common">Yeast</name>
    <name type="synonym">Torulaspora hansenii</name>
    <dbReference type="NCBI Taxonomy" id="284592"/>
    <lineage>
        <taxon>Eukaryota</taxon>
        <taxon>Fungi</taxon>
        <taxon>Dikarya</taxon>
        <taxon>Ascomycota</taxon>
        <taxon>Saccharomycotina</taxon>
        <taxon>Pichiomycetes</taxon>
        <taxon>Debaryomycetaceae</taxon>
        <taxon>Debaryomyces</taxon>
    </lineage>
</organism>
<proteinExistence type="inferred from homology"/>
<evidence type="ECO:0000250" key="1"/>
<evidence type="ECO:0000256" key="2">
    <source>
        <dbReference type="SAM" id="MobiDB-lite"/>
    </source>
</evidence>
<evidence type="ECO:0000305" key="3"/>
<comment type="function">
    <text evidence="1">RNA-binding component of the cleavage and polyadenylation factor (CPF) complex, which plays a key role in polyadenylation-dependent pre-mRNA 3'-end formation and cooperates with cleavage factors including the CFIA complex and NAB4/CFIB. Involved in poly(A) site recognition. May be involved in coupling transcription termination and mRNA 3'-end formation (By similarity).</text>
</comment>
<comment type="subcellular location">
    <subcellularLocation>
        <location evidence="1">Nucleus</location>
    </subcellularLocation>
</comment>
<comment type="similarity">
    <text evidence="3">Belongs to the CFT1 family.</text>
</comment>
<sequence length="1342" mass="152683">MDAYHEFIQPTRVSQCIGCNFISPTSKSLIVGKATVLQVFEIITTETKTQQYKLKLVEQFKLHGLITDIKAIRTVENSQLDYLLVSSKGAKMSLIKWDHHLNSISTVSLHYYENSIQSSTYEKLTTTDLVVEPNNNCTCLRFKNLLTFLPFETLDEEEEDDDDDEEMNGSSGSDKKATNKENGNSNGEEVSELFESSFMIDGRTLDSRIGDIIDMQFLYNYREPTIAIIFSKAHAWAGNLPKVKDNINFIVLSLDLVTKASTTVLKIDNLPFDIDKIIPLPQPLNGSLLMGCNEIIHVDNGGITRRLALNQFTSSITTSLKNYHDQSDLNLKLENCSVKPIPNDNKVLMILNNGDFYYINFKIDGKTIKKFFVEKVSDLNYDDIQLTYPGEIATLDNNLMFISNKNGNNPLLELKYKNFEHVIVQENEENSNPLDNEDEEDDLYEEDEVNKKISINKSSIEFIKHDELLNNGPISNFTLGHYSTDKFKSSLPNPNYKEVSIISNSGSHKQGGLNILTPSVQPIIQSSLSFSQIHRMWTINNEFLITSDDENFKSEIFQLNKSFARLNSKDFINNESTIGMHELNNSEFFLQVTPKKIFVFNKKFKKIISFNKELKKYANDEIIYSTFNDEFLMVFFSSGEVVIYSINTYNESFTKINIPKILNDTIITTGYITNSSLLNAVSKDINLLINKNRGTKRKHSGKNTSITSINTPDSDLGPKSKTFILVTGDNRIVAFNRFHNERCYQLNDVDKFTDHLSLGFFEPRDTYPDPFIKNIIFNELGDEYSKDEYLTILTIGGEILVYKLFFDGENFKLVKEKDLIITGAPDNAYSLGTTIERRLVYFPNVNGFTSIFVTGITPYYISKTTHSVPRIFKFTKLPAVSFAPYSDDKIKNGLIYLDNSKNARICEIPVDFNYENNWPIKKIPIKESIKSVTYHELSNTFVISTYEEIPYDCLDEEGKPIVGVDKSKPSANSYKGYIKLISPYNWSVIDTIELVDGEIGMNVQSMVLDVGSSTKKFKNKKELIVIGTGKYRMEDLSANGSFKIFEIIDIIPEPGKPETNHKFKEIHQEDTKGAVTSICEISGRFLVSQGQKIIIRDLQDDGVVPVAFLDTSVYVSEAKSFGNLLILGDSLKSIWLAGFDAEPFRMVMLGKDLQSLDVNCADFIIKDEEIFILIADNNSTLHLVKYDPEDPTSSNGQRLIHKASFNINSTPTCIRSIPKNEEINPSSTEVFQSIGSTIDGSFYTVFPINEASYRRMYILQQQITDKEYHFCGLNPRLNRFGGLSMTVNDTNTKPLLDYEVIRMFAKLNEDRRKNLSMKVSSKNVYQDIWKDLIEFDHVLKNL</sequence>
<keyword id="KW-0507">mRNA processing</keyword>
<keyword id="KW-0539">Nucleus</keyword>
<keyword id="KW-1185">Reference proteome</keyword>
<keyword id="KW-0694">RNA-binding</keyword>
<gene>
    <name type="primary">CFT1</name>
    <name type="ordered locus">DEHA2G17908g</name>
</gene>
<accession>Q6BHK3</accession>
<dbReference type="EMBL" id="CR382139">
    <property type="protein sequence ID" value="CAG90824.2"/>
    <property type="molecule type" value="Genomic_DNA"/>
</dbReference>
<dbReference type="RefSeq" id="XP_462318.2">
    <property type="nucleotide sequence ID" value="XM_462318.1"/>
</dbReference>
<dbReference type="SMR" id="Q6BHK3"/>
<dbReference type="FunCoup" id="Q6BHK3">
    <property type="interactions" value="1195"/>
</dbReference>
<dbReference type="STRING" id="284592.Q6BHK3"/>
<dbReference type="GeneID" id="2905256"/>
<dbReference type="KEGG" id="dha:DEHA2G17908g"/>
<dbReference type="VEuPathDB" id="FungiDB:DEHA2G17908g"/>
<dbReference type="eggNOG" id="KOG1896">
    <property type="taxonomic scope" value="Eukaryota"/>
</dbReference>
<dbReference type="HOGENOM" id="CLU_002414_2_1_1"/>
<dbReference type="InParanoid" id="Q6BHK3"/>
<dbReference type="OMA" id="PMTKFKL"/>
<dbReference type="OrthoDB" id="6109at2759"/>
<dbReference type="Proteomes" id="UP000000599">
    <property type="component" value="Chromosome G"/>
</dbReference>
<dbReference type="GO" id="GO:0005847">
    <property type="term" value="C:mRNA cleavage and polyadenylation specificity factor complex"/>
    <property type="evidence" value="ECO:0007669"/>
    <property type="project" value="EnsemblFungi"/>
</dbReference>
<dbReference type="GO" id="GO:0003723">
    <property type="term" value="F:RNA binding"/>
    <property type="evidence" value="ECO:0007669"/>
    <property type="project" value="UniProtKB-KW"/>
</dbReference>
<dbReference type="GO" id="GO:0006397">
    <property type="term" value="P:mRNA processing"/>
    <property type="evidence" value="ECO:0007669"/>
    <property type="project" value="UniProtKB-KW"/>
</dbReference>
<dbReference type="GO" id="GO:0006369">
    <property type="term" value="P:termination of RNA polymerase II transcription"/>
    <property type="evidence" value="ECO:0007669"/>
    <property type="project" value="EnsemblFungi"/>
</dbReference>
<dbReference type="FunFam" id="2.130.10.10:FF:001516">
    <property type="entry name" value="Protein CFT1"/>
    <property type="match status" value="1"/>
</dbReference>
<dbReference type="Gene3D" id="2.130.10.10">
    <property type="entry name" value="YVTN repeat-like/Quinoprotein amine dehydrogenase"/>
    <property type="match status" value="2"/>
</dbReference>
<dbReference type="InterPro" id="IPR018846">
    <property type="entry name" value="Beta-prop_RSE1/DDB1/CPSF1_1st"/>
</dbReference>
<dbReference type="InterPro" id="IPR004871">
    <property type="entry name" value="Cleavage/polyA-sp_fac_asu_C"/>
</dbReference>
<dbReference type="InterPro" id="IPR050358">
    <property type="entry name" value="RSE1/DDB1/CFT1/CPSF1"/>
</dbReference>
<dbReference type="InterPro" id="IPR015943">
    <property type="entry name" value="WD40/YVTN_repeat-like_dom_sf"/>
</dbReference>
<dbReference type="PANTHER" id="PTHR10644">
    <property type="entry name" value="DNA REPAIR/RNA PROCESSING CPSF FAMILY"/>
    <property type="match status" value="1"/>
</dbReference>
<dbReference type="Pfam" id="PF10433">
    <property type="entry name" value="Beta-prop_RSE1_1st"/>
    <property type="match status" value="1"/>
</dbReference>
<dbReference type="Pfam" id="PF03178">
    <property type="entry name" value="CPSF_A"/>
    <property type="match status" value="1"/>
</dbReference>
<protein>
    <recommendedName>
        <fullName>Protein CFT1</fullName>
    </recommendedName>
    <alternativeName>
        <fullName>Cleavage factor two protein 1</fullName>
    </alternativeName>
</protein>
<name>CFT1_DEBHA</name>
<feature type="chain" id="PRO_0000290629" description="Protein CFT1">
    <location>
        <begin position="1"/>
        <end position="1342"/>
    </location>
</feature>
<feature type="region of interest" description="Disordered" evidence="2">
    <location>
        <begin position="156"/>
        <end position="188"/>
    </location>
</feature>
<feature type="compositionally biased region" description="Acidic residues" evidence="2">
    <location>
        <begin position="156"/>
        <end position="167"/>
    </location>
</feature>
<reference key="1">
    <citation type="journal article" date="2004" name="Nature">
        <title>Genome evolution in yeasts.</title>
        <authorList>
            <person name="Dujon B."/>
            <person name="Sherman D."/>
            <person name="Fischer G."/>
            <person name="Durrens P."/>
            <person name="Casaregola S."/>
            <person name="Lafontaine I."/>
            <person name="de Montigny J."/>
            <person name="Marck C."/>
            <person name="Neuveglise C."/>
            <person name="Talla E."/>
            <person name="Goffard N."/>
            <person name="Frangeul L."/>
            <person name="Aigle M."/>
            <person name="Anthouard V."/>
            <person name="Babour A."/>
            <person name="Barbe V."/>
            <person name="Barnay S."/>
            <person name="Blanchin S."/>
            <person name="Beckerich J.-M."/>
            <person name="Beyne E."/>
            <person name="Bleykasten C."/>
            <person name="Boisrame A."/>
            <person name="Boyer J."/>
            <person name="Cattolico L."/>
            <person name="Confanioleri F."/>
            <person name="de Daruvar A."/>
            <person name="Despons L."/>
            <person name="Fabre E."/>
            <person name="Fairhead C."/>
            <person name="Ferry-Dumazet H."/>
            <person name="Groppi A."/>
            <person name="Hantraye F."/>
            <person name="Hennequin C."/>
            <person name="Jauniaux N."/>
            <person name="Joyet P."/>
            <person name="Kachouri R."/>
            <person name="Kerrest A."/>
            <person name="Koszul R."/>
            <person name="Lemaire M."/>
            <person name="Lesur I."/>
            <person name="Ma L."/>
            <person name="Muller H."/>
            <person name="Nicaud J.-M."/>
            <person name="Nikolski M."/>
            <person name="Oztas S."/>
            <person name="Ozier-Kalogeropoulos O."/>
            <person name="Pellenz S."/>
            <person name="Potier S."/>
            <person name="Richard G.-F."/>
            <person name="Straub M.-L."/>
            <person name="Suleau A."/>
            <person name="Swennen D."/>
            <person name="Tekaia F."/>
            <person name="Wesolowski-Louvel M."/>
            <person name="Westhof E."/>
            <person name="Wirth B."/>
            <person name="Zeniou-Meyer M."/>
            <person name="Zivanovic Y."/>
            <person name="Bolotin-Fukuhara M."/>
            <person name="Thierry A."/>
            <person name="Bouchier C."/>
            <person name="Caudron B."/>
            <person name="Scarpelli C."/>
            <person name="Gaillardin C."/>
            <person name="Weissenbach J."/>
            <person name="Wincker P."/>
            <person name="Souciet J.-L."/>
        </authorList>
    </citation>
    <scope>NUCLEOTIDE SEQUENCE [LARGE SCALE GENOMIC DNA]</scope>
    <source>
        <strain>ATCC 36239 / CBS 767 / BCRC 21394 / JCM 1990 / NBRC 0083 / IGC 2968</strain>
    </source>
</reference>